<keyword id="KW-0963">Cytoplasm</keyword>
<keyword id="KW-0251">Elongation factor</keyword>
<keyword id="KW-0342">GTP-binding</keyword>
<keyword id="KW-0547">Nucleotide-binding</keyword>
<keyword id="KW-0648">Protein biosynthesis</keyword>
<keyword id="KW-1185">Reference proteome</keyword>
<evidence type="ECO:0000255" key="1">
    <source>
        <dbReference type="HAMAP-Rule" id="MF_00054"/>
    </source>
</evidence>
<organism>
    <name type="scientific">Amoebophilus asiaticus (strain 5a2)</name>
    <dbReference type="NCBI Taxonomy" id="452471"/>
    <lineage>
        <taxon>Bacteria</taxon>
        <taxon>Pseudomonadati</taxon>
        <taxon>Bacteroidota</taxon>
        <taxon>Cytophagia</taxon>
        <taxon>Cytophagales</taxon>
        <taxon>Amoebophilaceae</taxon>
        <taxon>Candidatus Amoebophilus</taxon>
    </lineage>
</organism>
<reference key="1">
    <citation type="journal article" date="2010" name="J. Bacteriol.">
        <title>The genome of the amoeba symbiont 'Candidatus Amoebophilus asiaticus' reveals common mechanisms for host cell interaction among amoeba-associated bacteria.</title>
        <authorList>
            <person name="Schmitz-Esser S."/>
            <person name="Tischler P."/>
            <person name="Arnold R."/>
            <person name="Montanaro J."/>
            <person name="Wagner M."/>
            <person name="Rattei T."/>
            <person name="Horn M."/>
        </authorList>
    </citation>
    <scope>NUCLEOTIDE SEQUENCE [LARGE SCALE GENOMIC DNA]</scope>
    <source>
        <strain>5a2</strain>
    </source>
</reference>
<gene>
    <name evidence="1" type="primary">fusA</name>
    <name type="ordered locus">Aasi_0125</name>
</gene>
<name>EFG_AMOA5</name>
<dbReference type="EMBL" id="CP001102">
    <property type="protein sequence ID" value="ACE05572.1"/>
    <property type="molecule type" value="Genomic_DNA"/>
</dbReference>
<dbReference type="RefSeq" id="WP_012472343.1">
    <property type="nucleotide sequence ID" value="NC_010830.1"/>
</dbReference>
<dbReference type="SMR" id="B3EUF3"/>
<dbReference type="STRING" id="452471.Aasi_0125"/>
<dbReference type="KEGG" id="aas:Aasi_0125"/>
<dbReference type="eggNOG" id="COG0480">
    <property type="taxonomic scope" value="Bacteria"/>
</dbReference>
<dbReference type="HOGENOM" id="CLU_002794_4_1_10"/>
<dbReference type="OrthoDB" id="9801591at2"/>
<dbReference type="Proteomes" id="UP000001227">
    <property type="component" value="Chromosome"/>
</dbReference>
<dbReference type="GO" id="GO:0005737">
    <property type="term" value="C:cytoplasm"/>
    <property type="evidence" value="ECO:0007669"/>
    <property type="project" value="UniProtKB-SubCell"/>
</dbReference>
<dbReference type="GO" id="GO:0005525">
    <property type="term" value="F:GTP binding"/>
    <property type="evidence" value="ECO:0007669"/>
    <property type="project" value="UniProtKB-UniRule"/>
</dbReference>
<dbReference type="GO" id="GO:0003924">
    <property type="term" value="F:GTPase activity"/>
    <property type="evidence" value="ECO:0007669"/>
    <property type="project" value="InterPro"/>
</dbReference>
<dbReference type="GO" id="GO:0003746">
    <property type="term" value="F:translation elongation factor activity"/>
    <property type="evidence" value="ECO:0007669"/>
    <property type="project" value="UniProtKB-UniRule"/>
</dbReference>
<dbReference type="GO" id="GO:0032790">
    <property type="term" value="P:ribosome disassembly"/>
    <property type="evidence" value="ECO:0007669"/>
    <property type="project" value="TreeGrafter"/>
</dbReference>
<dbReference type="CDD" id="cd01886">
    <property type="entry name" value="EF-G"/>
    <property type="match status" value="1"/>
</dbReference>
<dbReference type="CDD" id="cd16262">
    <property type="entry name" value="EFG_III"/>
    <property type="match status" value="1"/>
</dbReference>
<dbReference type="CDD" id="cd01434">
    <property type="entry name" value="EFG_mtEFG1_IV"/>
    <property type="match status" value="1"/>
</dbReference>
<dbReference type="CDD" id="cd03713">
    <property type="entry name" value="EFG_mtEFG_C"/>
    <property type="match status" value="1"/>
</dbReference>
<dbReference type="CDD" id="cd04088">
    <property type="entry name" value="EFG_mtEFG_II"/>
    <property type="match status" value="1"/>
</dbReference>
<dbReference type="FunFam" id="2.40.30.10:FF:000006">
    <property type="entry name" value="Elongation factor G"/>
    <property type="match status" value="1"/>
</dbReference>
<dbReference type="FunFam" id="3.30.230.10:FF:000003">
    <property type="entry name" value="Elongation factor G"/>
    <property type="match status" value="1"/>
</dbReference>
<dbReference type="FunFam" id="3.30.70.240:FF:000001">
    <property type="entry name" value="Elongation factor G"/>
    <property type="match status" value="1"/>
</dbReference>
<dbReference type="FunFam" id="3.30.70.870:FF:000001">
    <property type="entry name" value="Elongation factor G"/>
    <property type="match status" value="1"/>
</dbReference>
<dbReference type="FunFam" id="3.40.50.300:FF:000029">
    <property type="entry name" value="Elongation factor G"/>
    <property type="match status" value="1"/>
</dbReference>
<dbReference type="Gene3D" id="3.30.230.10">
    <property type="match status" value="1"/>
</dbReference>
<dbReference type="Gene3D" id="3.30.70.240">
    <property type="match status" value="1"/>
</dbReference>
<dbReference type="Gene3D" id="3.30.70.870">
    <property type="entry name" value="Elongation Factor G (Translational Gtpase), domain 3"/>
    <property type="match status" value="1"/>
</dbReference>
<dbReference type="Gene3D" id="3.40.50.300">
    <property type="entry name" value="P-loop containing nucleotide triphosphate hydrolases"/>
    <property type="match status" value="1"/>
</dbReference>
<dbReference type="Gene3D" id="2.40.30.10">
    <property type="entry name" value="Translation factors"/>
    <property type="match status" value="1"/>
</dbReference>
<dbReference type="HAMAP" id="MF_00054_B">
    <property type="entry name" value="EF_G_EF_2_B"/>
    <property type="match status" value="1"/>
</dbReference>
<dbReference type="InterPro" id="IPR041095">
    <property type="entry name" value="EFG_II"/>
</dbReference>
<dbReference type="InterPro" id="IPR009022">
    <property type="entry name" value="EFG_III"/>
</dbReference>
<dbReference type="InterPro" id="IPR035647">
    <property type="entry name" value="EFG_III/V"/>
</dbReference>
<dbReference type="InterPro" id="IPR047872">
    <property type="entry name" value="EFG_IV"/>
</dbReference>
<dbReference type="InterPro" id="IPR035649">
    <property type="entry name" value="EFG_V"/>
</dbReference>
<dbReference type="InterPro" id="IPR000640">
    <property type="entry name" value="EFG_V-like"/>
</dbReference>
<dbReference type="InterPro" id="IPR004161">
    <property type="entry name" value="EFTu-like_2"/>
</dbReference>
<dbReference type="InterPro" id="IPR031157">
    <property type="entry name" value="G_TR_CS"/>
</dbReference>
<dbReference type="InterPro" id="IPR027417">
    <property type="entry name" value="P-loop_NTPase"/>
</dbReference>
<dbReference type="InterPro" id="IPR020568">
    <property type="entry name" value="Ribosomal_Su5_D2-typ_SF"/>
</dbReference>
<dbReference type="InterPro" id="IPR014721">
    <property type="entry name" value="Ribsml_uS5_D2-typ_fold_subgr"/>
</dbReference>
<dbReference type="InterPro" id="IPR005225">
    <property type="entry name" value="Small_GTP-bd"/>
</dbReference>
<dbReference type="InterPro" id="IPR000795">
    <property type="entry name" value="T_Tr_GTP-bd_dom"/>
</dbReference>
<dbReference type="InterPro" id="IPR009000">
    <property type="entry name" value="Transl_B-barrel_sf"/>
</dbReference>
<dbReference type="InterPro" id="IPR004540">
    <property type="entry name" value="Transl_elong_EFG/EF2"/>
</dbReference>
<dbReference type="InterPro" id="IPR005517">
    <property type="entry name" value="Transl_elong_EFG/EF2_IV"/>
</dbReference>
<dbReference type="NCBIfam" id="TIGR00484">
    <property type="entry name" value="EF-G"/>
    <property type="match status" value="1"/>
</dbReference>
<dbReference type="NCBIfam" id="NF009381">
    <property type="entry name" value="PRK12740.1-5"/>
    <property type="match status" value="1"/>
</dbReference>
<dbReference type="NCBIfam" id="TIGR00231">
    <property type="entry name" value="small_GTP"/>
    <property type="match status" value="1"/>
</dbReference>
<dbReference type="PANTHER" id="PTHR43261:SF1">
    <property type="entry name" value="RIBOSOME-RELEASING FACTOR 2, MITOCHONDRIAL"/>
    <property type="match status" value="1"/>
</dbReference>
<dbReference type="PANTHER" id="PTHR43261">
    <property type="entry name" value="TRANSLATION ELONGATION FACTOR G-RELATED"/>
    <property type="match status" value="1"/>
</dbReference>
<dbReference type="Pfam" id="PF00679">
    <property type="entry name" value="EFG_C"/>
    <property type="match status" value="1"/>
</dbReference>
<dbReference type="Pfam" id="PF14492">
    <property type="entry name" value="EFG_III"/>
    <property type="match status" value="1"/>
</dbReference>
<dbReference type="Pfam" id="PF03764">
    <property type="entry name" value="EFG_IV"/>
    <property type="match status" value="1"/>
</dbReference>
<dbReference type="Pfam" id="PF00009">
    <property type="entry name" value="GTP_EFTU"/>
    <property type="match status" value="1"/>
</dbReference>
<dbReference type="Pfam" id="PF03144">
    <property type="entry name" value="GTP_EFTU_D2"/>
    <property type="match status" value="1"/>
</dbReference>
<dbReference type="PRINTS" id="PR00315">
    <property type="entry name" value="ELONGATNFCT"/>
</dbReference>
<dbReference type="SMART" id="SM00838">
    <property type="entry name" value="EFG_C"/>
    <property type="match status" value="1"/>
</dbReference>
<dbReference type="SMART" id="SM00889">
    <property type="entry name" value="EFG_IV"/>
    <property type="match status" value="1"/>
</dbReference>
<dbReference type="SUPFAM" id="SSF54980">
    <property type="entry name" value="EF-G C-terminal domain-like"/>
    <property type="match status" value="2"/>
</dbReference>
<dbReference type="SUPFAM" id="SSF52540">
    <property type="entry name" value="P-loop containing nucleoside triphosphate hydrolases"/>
    <property type="match status" value="1"/>
</dbReference>
<dbReference type="SUPFAM" id="SSF54211">
    <property type="entry name" value="Ribosomal protein S5 domain 2-like"/>
    <property type="match status" value="1"/>
</dbReference>
<dbReference type="SUPFAM" id="SSF50447">
    <property type="entry name" value="Translation proteins"/>
    <property type="match status" value="1"/>
</dbReference>
<dbReference type="PROSITE" id="PS00301">
    <property type="entry name" value="G_TR_1"/>
    <property type="match status" value="1"/>
</dbReference>
<dbReference type="PROSITE" id="PS51722">
    <property type="entry name" value="G_TR_2"/>
    <property type="match status" value="1"/>
</dbReference>
<feature type="chain" id="PRO_1000091690" description="Elongation factor G">
    <location>
        <begin position="1"/>
        <end position="709"/>
    </location>
</feature>
<feature type="domain" description="tr-type G">
    <location>
        <begin position="6"/>
        <end position="295"/>
    </location>
</feature>
<feature type="binding site" evidence="1">
    <location>
        <begin position="15"/>
        <end position="22"/>
    </location>
    <ligand>
        <name>GTP</name>
        <dbReference type="ChEBI" id="CHEBI:37565"/>
    </ligand>
</feature>
<feature type="binding site" evidence="1">
    <location>
        <begin position="92"/>
        <end position="96"/>
    </location>
    <ligand>
        <name>GTP</name>
        <dbReference type="ChEBI" id="CHEBI:37565"/>
    </ligand>
</feature>
<feature type="binding site" evidence="1">
    <location>
        <begin position="146"/>
        <end position="149"/>
    </location>
    <ligand>
        <name>GTP</name>
        <dbReference type="ChEBI" id="CHEBI:37565"/>
    </ligand>
</feature>
<accession>B3EUF3</accession>
<protein>
    <recommendedName>
        <fullName evidence="1">Elongation factor G</fullName>
        <shortName evidence="1">EF-G</shortName>
    </recommendedName>
</protein>
<sequence length="709" mass="78522">MAKDLKFLRNIGIMAHIDAGKTTTTERILYYTGLTHKIGEVHEGGAVMDWMEQEQERGITITAAATTTFWKYPTVQGQVTKDTQQYSINIIDTPGHVDFTVEVERSLRVLDGAVALFCAVSGVEPQSETVWRQADKYRVPRICFVNKMDRAGADFFNAVSEIKSKLGANPIPLQIPIGSEDTFKGVVDLIRNQAIIWNDEDLGMTYQVVPIPEDLKETVEEYRQKLMESVAEYDEVLLEKYFNDPNTITTEEIMVAIRKAVIDMSISPVLCGASFKNKGVQALLDAVCTYLPSPLDLPPVQGTNPDTEEKQIRKPDVNEPFAALAFKIATDPFVGRLAFMRVYSGKLDGSSYVYNNRTGKKERISRLMQMHANKQNPIDSIEAGDICAAVGFKDIRTGDTLTDEKNKIILESIVFPEPVIGYSIEPKKQADVDKLSMAISKLVEEDPTLHVETNEETGQTVMKGMGELHLEIIIDRLRREFKLEINQGAPQVAYKEALTSTIEHKEVYKKQTGGRGKFADIVFELGPREDGQMGLQFTNEIVGGAIPREFIPAIQKGFAAAMANGPLASYPVESMKVKLIHGSFHEVDSDSLSFELAARIGFKEAAKKASPVIMEPIMAVEVTTPDEFTGPVTGDLNKRRGIMRGMDAKGNTQVVKADVPLSELFGYVTDLRTITSGRAAATLTFSRYEQVPKQLADSIVEKVKGTANK</sequence>
<proteinExistence type="inferred from homology"/>
<comment type="function">
    <text evidence="1">Catalyzes the GTP-dependent ribosomal translocation step during translation elongation. During this step, the ribosome changes from the pre-translocational (PRE) to the post-translocational (POST) state as the newly formed A-site-bound peptidyl-tRNA and P-site-bound deacylated tRNA move to the P and E sites, respectively. Catalyzes the coordinated movement of the two tRNA molecules, the mRNA and conformational changes in the ribosome.</text>
</comment>
<comment type="subcellular location">
    <subcellularLocation>
        <location evidence="1">Cytoplasm</location>
    </subcellularLocation>
</comment>
<comment type="similarity">
    <text evidence="1">Belongs to the TRAFAC class translation factor GTPase superfamily. Classic translation factor GTPase family. EF-G/EF-2 subfamily.</text>
</comment>